<name>DAPE_XYLFM</name>
<gene>
    <name evidence="1" type="primary">dapE</name>
    <name type="ordered locus">Xfasm12_0095</name>
</gene>
<keyword id="KW-0028">Amino-acid biosynthesis</keyword>
<keyword id="KW-0170">Cobalt</keyword>
<keyword id="KW-0220">Diaminopimelate biosynthesis</keyword>
<keyword id="KW-0378">Hydrolase</keyword>
<keyword id="KW-0457">Lysine biosynthesis</keyword>
<keyword id="KW-0479">Metal-binding</keyword>
<keyword id="KW-0862">Zinc</keyword>
<evidence type="ECO:0000255" key="1">
    <source>
        <dbReference type="HAMAP-Rule" id="MF_01690"/>
    </source>
</evidence>
<protein>
    <recommendedName>
        <fullName evidence="1">Succinyl-diaminopimelate desuccinylase</fullName>
        <shortName evidence="1">SDAP desuccinylase</shortName>
        <ecNumber evidence="1">3.5.1.18</ecNumber>
    </recommendedName>
    <alternativeName>
        <fullName evidence="1">N-succinyl-LL-2,6-diaminoheptanedioate amidohydrolase</fullName>
    </alternativeName>
</protein>
<feature type="chain" id="PRO_0000375790" description="Succinyl-diaminopimelate desuccinylase">
    <location>
        <begin position="1"/>
        <end position="377"/>
    </location>
</feature>
<feature type="active site" evidence="1">
    <location>
        <position position="68"/>
    </location>
</feature>
<feature type="active site" description="Proton acceptor" evidence="1">
    <location>
        <position position="133"/>
    </location>
</feature>
<feature type="binding site" evidence="1">
    <location>
        <position position="66"/>
    </location>
    <ligand>
        <name>Zn(2+)</name>
        <dbReference type="ChEBI" id="CHEBI:29105"/>
        <label>1</label>
    </ligand>
</feature>
<feature type="binding site" evidence="1">
    <location>
        <position position="99"/>
    </location>
    <ligand>
        <name>Zn(2+)</name>
        <dbReference type="ChEBI" id="CHEBI:29105"/>
        <label>1</label>
    </ligand>
</feature>
<feature type="binding site" evidence="1">
    <location>
        <position position="99"/>
    </location>
    <ligand>
        <name>Zn(2+)</name>
        <dbReference type="ChEBI" id="CHEBI:29105"/>
        <label>2</label>
    </ligand>
</feature>
<feature type="binding site" evidence="1">
    <location>
        <position position="134"/>
    </location>
    <ligand>
        <name>Zn(2+)</name>
        <dbReference type="ChEBI" id="CHEBI:29105"/>
        <label>2</label>
    </ligand>
</feature>
<feature type="binding site" evidence="1">
    <location>
        <position position="162"/>
    </location>
    <ligand>
        <name>Zn(2+)</name>
        <dbReference type="ChEBI" id="CHEBI:29105"/>
        <label>1</label>
    </ligand>
</feature>
<feature type="binding site" evidence="1">
    <location>
        <position position="348"/>
    </location>
    <ligand>
        <name>Zn(2+)</name>
        <dbReference type="ChEBI" id="CHEBI:29105"/>
        <label>2</label>
    </ligand>
</feature>
<organism>
    <name type="scientific">Xylella fastidiosa (strain M12)</name>
    <dbReference type="NCBI Taxonomy" id="405440"/>
    <lineage>
        <taxon>Bacteria</taxon>
        <taxon>Pseudomonadati</taxon>
        <taxon>Pseudomonadota</taxon>
        <taxon>Gammaproteobacteria</taxon>
        <taxon>Lysobacterales</taxon>
        <taxon>Lysobacteraceae</taxon>
        <taxon>Xylella</taxon>
    </lineage>
</organism>
<comment type="function">
    <text evidence="1">Catalyzes the hydrolysis of N-succinyl-L,L-diaminopimelic acid (SDAP), forming succinate and LL-2,6-diaminopimelate (DAP), an intermediate involved in the bacterial biosynthesis of lysine and meso-diaminopimelic acid, an essential component of bacterial cell walls.</text>
</comment>
<comment type="catalytic activity">
    <reaction evidence="1">
        <text>N-succinyl-(2S,6S)-2,6-diaminopimelate + H2O = (2S,6S)-2,6-diaminopimelate + succinate</text>
        <dbReference type="Rhea" id="RHEA:22608"/>
        <dbReference type="ChEBI" id="CHEBI:15377"/>
        <dbReference type="ChEBI" id="CHEBI:30031"/>
        <dbReference type="ChEBI" id="CHEBI:57609"/>
        <dbReference type="ChEBI" id="CHEBI:58087"/>
        <dbReference type="EC" id="3.5.1.18"/>
    </reaction>
</comment>
<comment type="cofactor">
    <cofactor evidence="1">
        <name>Zn(2+)</name>
        <dbReference type="ChEBI" id="CHEBI:29105"/>
    </cofactor>
    <cofactor evidence="1">
        <name>Co(2+)</name>
        <dbReference type="ChEBI" id="CHEBI:48828"/>
    </cofactor>
    <text evidence="1">Binds 2 Zn(2+) or Co(2+) ions per subunit.</text>
</comment>
<comment type="pathway">
    <text evidence="1">Amino-acid biosynthesis; L-lysine biosynthesis via DAP pathway; LL-2,6-diaminopimelate from (S)-tetrahydrodipicolinate (succinylase route): step 3/3.</text>
</comment>
<comment type="subunit">
    <text evidence="1">Homodimer.</text>
</comment>
<comment type="similarity">
    <text evidence="1">Belongs to the peptidase M20A family. DapE subfamily.</text>
</comment>
<dbReference type="EC" id="3.5.1.18" evidence="1"/>
<dbReference type="EMBL" id="CP000941">
    <property type="protein sequence ID" value="ACA11135.1"/>
    <property type="molecule type" value="Genomic_DNA"/>
</dbReference>
<dbReference type="RefSeq" id="WP_004085536.1">
    <property type="nucleotide sequence ID" value="NC_010513.1"/>
</dbReference>
<dbReference type="SMR" id="B0U296"/>
<dbReference type="KEGG" id="xfm:Xfasm12_0095"/>
<dbReference type="HOGENOM" id="CLU_021802_4_0_6"/>
<dbReference type="UniPathway" id="UPA00034">
    <property type="reaction ID" value="UER00021"/>
</dbReference>
<dbReference type="GO" id="GO:0008777">
    <property type="term" value="F:acetylornithine deacetylase activity"/>
    <property type="evidence" value="ECO:0007669"/>
    <property type="project" value="TreeGrafter"/>
</dbReference>
<dbReference type="GO" id="GO:0050897">
    <property type="term" value="F:cobalt ion binding"/>
    <property type="evidence" value="ECO:0007669"/>
    <property type="project" value="UniProtKB-UniRule"/>
</dbReference>
<dbReference type="GO" id="GO:0009014">
    <property type="term" value="F:succinyl-diaminopimelate desuccinylase activity"/>
    <property type="evidence" value="ECO:0007669"/>
    <property type="project" value="UniProtKB-UniRule"/>
</dbReference>
<dbReference type="GO" id="GO:0008270">
    <property type="term" value="F:zinc ion binding"/>
    <property type="evidence" value="ECO:0007669"/>
    <property type="project" value="UniProtKB-UniRule"/>
</dbReference>
<dbReference type="GO" id="GO:0019877">
    <property type="term" value="P:diaminopimelate biosynthetic process"/>
    <property type="evidence" value="ECO:0007669"/>
    <property type="project" value="UniProtKB-UniRule"/>
</dbReference>
<dbReference type="GO" id="GO:0006526">
    <property type="term" value="P:L-arginine biosynthetic process"/>
    <property type="evidence" value="ECO:0007669"/>
    <property type="project" value="TreeGrafter"/>
</dbReference>
<dbReference type="GO" id="GO:0009089">
    <property type="term" value="P:lysine biosynthetic process via diaminopimelate"/>
    <property type="evidence" value="ECO:0007669"/>
    <property type="project" value="UniProtKB-UniRule"/>
</dbReference>
<dbReference type="CDD" id="cd03891">
    <property type="entry name" value="M20_DapE_proteobac"/>
    <property type="match status" value="1"/>
</dbReference>
<dbReference type="FunFam" id="3.40.630.10:FF:000005">
    <property type="entry name" value="Succinyl-diaminopimelate desuccinylase"/>
    <property type="match status" value="1"/>
</dbReference>
<dbReference type="Gene3D" id="3.40.630.10">
    <property type="entry name" value="Zn peptidases"/>
    <property type="match status" value="2"/>
</dbReference>
<dbReference type="HAMAP" id="MF_01690">
    <property type="entry name" value="DapE"/>
    <property type="match status" value="1"/>
</dbReference>
<dbReference type="InterPro" id="IPR001261">
    <property type="entry name" value="ArgE/DapE_CS"/>
</dbReference>
<dbReference type="InterPro" id="IPR036264">
    <property type="entry name" value="Bact_exopeptidase_dim_dom"/>
</dbReference>
<dbReference type="InterPro" id="IPR005941">
    <property type="entry name" value="DapE_proteobac"/>
</dbReference>
<dbReference type="InterPro" id="IPR002933">
    <property type="entry name" value="Peptidase_M20"/>
</dbReference>
<dbReference type="InterPro" id="IPR011650">
    <property type="entry name" value="Peptidase_M20_dimer"/>
</dbReference>
<dbReference type="InterPro" id="IPR050072">
    <property type="entry name" value="Peptidase_M20A"/>
</dbReference>
<dbReference type="NCBIfam" id="TIGR01246">
    <property type="entry name" value="dapE_proteo"/>
    <property type="match status" value="1"/>
</dbReference>
<dbReference type="NCBIfam" id="NF009557">
    <property type="entry name" value="PRK13009.1"/>
    <property type="match status" value="1"/>
</dbReference>
<dbReference type="PANTHER" id="PTHR43808">
    <property type="entry name" value="ACETYLORNITHINE DEACETYLASE"/>
    <property type="match status" value="1"/>
</dbReference>
<dbReference type="PANTHER" id="PTHR43808:SF31">
    <property type="entry name" value="N-ACETYL-L-CITRULLINE DEACETYLASE"/>
    <property type="match status" value="1"/>
</dbReference>
<dbReference type="Pfam" id="PF07687">
    <property type="entry name" value="M20_dimer"/>
    <property type="match status" value="1"/>
</dbReference>
<dbReference type="Pfam" id="PF01546">
    <property type="entry name" value="Peptidase_M20"/>
    <property type="match status" value="1"/>
</dbReference>
<dbReference type="SUPFAM" id="SSF55031">
    <property type="entry name" value="Bacterial exopeptidase dimerisation domain"/>
    <property type="match status" value="1"/>
</dbReference>
<dbReference type="SUPFAM" id="SSF53187">
    <property type="entry name" value="Zn-dependent exopeptidases"/>
    <property type="match status" value="1"/>
</dbReference>
<dbReference type="PROSITE" id="PS00759">
    <property type="entry name" value="ARGE_DAPE_CPG2_2"/>
    <property type="match status" value="1"/>
</dbReference>
<proteinExistence type="inferred from homology"/>
<reference key="1">
    <citation type="journal article" date="2010" name="J. Bacteriol.">
        <title>Whole genome sequences of two Xylella fastidiosa strains (M12 and M23) causing almond leaf scorch disease in California.</title>
        <authorList>
            <person name="Chen J."/>
            <person name="Xie G."/>
            <person name="Han S."/>
            <person name="Chertkov O."/>
            <person name="Sims D."/>
            <person name="Civerolo E.L."/>
        </authorList>
    </citation>
    <scope>NUCLEOTIDE SEQUENCE [LARGE SCALE GENOMIC DNA]</scope>
    <source>
        <strain>M12</strain>
    </source>
</reference>
<sequence>MSEVFDLTCDLISRPSVTPEDAGCQAMIAARLERVGFTCEHLHYGSVANLWATHGQGAPVLVLLGHTDVVPPGPIEAWTSNPFIPQRREGKLYGRGAADMKGSVAAFVIAAERFLVAHPGHPGTLAILLTSDEEGQAIDGVRKVAETLRQRGQRIDWCLTGEPSSSERLGDLLRVGRRGSLSATLHVKGVQGHVAYPHQARNPIHLAVPALAALTGRHWDDGDESFPSTSLQISNIHAGTGANNVIPGALEVAFNLRYNPHWSAPRLESEIVALLDQHGLDYTLHWHRSGEPFYTPEGKLRRIAREVLERFSGAPPEESTGGGTSDARFIAPLGAQCIEVGPVNASIHQVDEHVCLADLEALPDLYQLLIERLLAEH</sequence>
<accession>B0U296</accession>